<comment type="function">
    <text evidence="1 5 6">Catalyzes the oxidative deamination of biogenic and xenobiotic amines and has important functions in the metabolism of neuroactive and vasoactive amines in the central nervous system and peripheral tissues (PubMed:15621520, PubMed:16917825). Preferentially oxidizes serotonin and tyramine (PubMed:15621520, PubMed:16917825). Also catalyzes the oxidative deamination of kynuramine to 3-(2-aminophenyl)-3-oxopropanal that can spontaneously condense to 4-hydroxyquinoline (By similarity).</text>
</comment>
<comment type="catalytic activity">
    <reaction evidence="2">
        <text>a secondary aliphatic amine + O2 + H2O = a primary amine + an aldehyde + H2O2</text>
        <dbReference type="Rhea" id="RHEA:26414"/>
        <dbReference type="ChEBI" id="CHEBI:15377"/>
        <dbReference type="ChEBI" id="CHEBI:15379"/>
        <dbReference type="ChEBI" id="CHEBI:16240"/>
        <dbReference type="ChEBI" id="CHEBI:17478"/>
        <dbReference type="ChEBI" id="CHEBI:58855"/>
        <dbReference type="ChEBI" id="CHEBI:65296"/>
        <dbReference type="EC" id="1.4.3.4"/>
    </reaction>
</comment>
<comment type="catalytic activity">
    <reaction evidence="5 6">
        <text>a primary methyl amine + O2 + H2O = an aldehyde + H2O2 + NH4(+)</text>
        <dbReference type="Rhea" id="RHEA:16153"/>
        <dbReference type="ChEBI" id="CHEBI:15377"/>
        <dbReference type="ChEBI" id="CHEBI:15379"/>
        <dbReference type="ChEBI" id="CHEBI:16240"/>
        <dbReference type="ChEBI" id="CHEBI:17478"/>
        <dbReference type="ChEBI" id="CHEBI:28938"/>
        <dbReference type="ChEBI" id="CHEBI:228804"/>
        <dbReference type="EC" id="1.4.3.21"/>
    </reaction>
</comment>
<comment type="catalytic activity">
    <reaction evidence="5 6">
        <text>serotonin + O2 + H2O = (5-hydroxyindol-3-yl)acetaldehyde + H2O2 + NH4(+)</text>
        <dbReference type="Rhea" id="RHEA:69072"/>
        <dbReference type="ChEBI" id="CHEBI:15377"/>
        <dbReference type="ChEBI" id="CHEBI:15379"/>
        <dbReference type="ChEBI" id="CHEBI:16240"/>
        <dbReference type="ChEBI" id="CHEBI:28938"/>
        <dbReference type="ChEBI" id="CHEBI:50157"/>
        <dbReference type="ChEBI" id="CHEBI:350546"/>
    </reaction>
</comment>
<comment type="catalytic activity">
    <reaction evidence="5 6">
        <text>2-phenylethylamine + O2 + H2O = 2-phenylacetaldehyde + H2O2 + NH4(+)</text>
        <dbReference type="Rhea" id="RHEA:25265"/>
        <dbReference type="ChEBI" id="CHEBI:15377"/>
        <dbReference type="ChEBI" id="CHEBI:15379"/>
        <dbReference type="ChEBI" id="CHEBI:16240"/>
        <dbReference type="ChEBI" id="CHEBI:16424"/>
        <dbReference type="ChEBI" id="CHEBI:28938"/>
        <dbReference type="ChEBI" id="CHEBI:225237"/>
    </reaction>
</comment>
<comment type="catalytic activity">
    <reaction evidence="6">
        <text>tyramine + O2 + H2O = (4-hydroxyphenyl)acetaldehyde + H2O2 + NH4(+)</text>
        <dbReference type="Rhea" id="RHEA:30591"/>
        <dbReference type="ChEBI" id="CHEBI:15377"/>
        <dbReference type="ChEBI" id="CHEBI:15379"/>
        <dbReference type="ChEBI" id="CHEBI:15621"/>
        <dbReference type="ChEBI" id="CHEBI:16240"/>
        <dbReference type="ChEBI" id="CHEBI:28938"/>
        <dbReference type="ChEBI" id="CHEBI:327995"/>
    </reaction>
</comment>
<comment type="catalytic activity">
    <reaction evidence="6">
        <text>dopamine + O2 + H2O = 3,4-dihydroxyphenylacetaldehyde + H2O2 + NH4(+)</text>
        <dbReference type="Rhea" id="RHEA:27946"/>
        <dbReference type="ChEBI" id="CHEBI:15377"/>
        <dbReference type="ChEBI" id="CHEBI:15379"/>
        <dbReference type="ChEBI" id="CHEBI:16240"/>
        <dbReference type="ChEBI" id="CHEBI:27978"/>
        <dbReference type="ChEBI" id="CHEBI:28938"/>
        <dbReference type="ChEBI" id="CHEBI:59905"/>
    </reaction>
</comment>
<comment type="catalytic activity">
    <reaction evidence="1">
        <text>(R)-adrenaline + O2 + H2O = (R)-3,4-dihydroxymandelaldehyde + methylamine + H2O2</text>
        <dbReference type="Rhea" id="RHEA:51168"/>
        <dbReference type="ChEBI" id="CHEBI:15377"/>
        <dbReference type="ChEBI" id="CHEBI:15379"/>
        <dbReference type="ChEBI" id="CHEBI:16240"/>
        <dbReference type="ChEBI" id="CHEBI:59338"/>
        <dbReference type="ChEBI" id="CHEBI:71406"/>
        <dbReference type="ChEBI" id="CHEBI:180943"/>
    </reaction>
</comment>
<comment type="catalytic activity">
    <reaction evidence="1">
        <text>(R)-noradrenaline + O2 + H2O = (R)-3,4-dihydroxymandelaldehyde + H2O2 + NH4(+)</text>
        <dbReference type="Rhea" id="RHEA:69076"/>
        <dbReference type="ChEBI" id="CHEBI:15377"/>
        <dbReference type="ChEBI" id="CHEBI:15379"/>
        <dbReference type="ChEBI" id="CHEBI:16240"/>
        <dbReference type="ChEBI" id="CHEBI:28938"/>
        <dbReference type="ChEBI" id="CHEBI:72587"/>
        <dbReference type="ChEBI" id="CHEBI:180943"/>
    </reaction>
</comment>
<comment type="catalytic activity">
    <reaction evidence="1">
        <text>kynuramine + O2 + H2O = 3-(2-aminophenyl)-3-oxopropanal + H2O2 + NH4(+)</text>
        <dbReference type="Rhea" id="RHEA:59596"/>
        <dbReference type="ChEBI" id="CHEBI:15377"/>
        <dbReference type="ChEBI" id="CHEBI:15379"/>
        <dbReference type="ChEBI" id="CHEBI:16240"/>
        <dbReference type="ChEBI" id="CHEBI:28938"/>
        <dbReference type="ChEBI" id="CHEBI:180898"/>
        <dbReference type="ChEBI" id="CHEBI:180899"/>
    </reaction>
    <physiologicalReaction direction="left-to-right" evidence="1">
        <dbReference type="Rhea" id="RHEA:59597"/>
    </physiologicalReaction>
</comment>
<comment type="catalytic activity">
    <reaction evidence="1">
        <text>tryptamine + O2 + H2O = indole-3-acetaldehyde + H2O2 + NH4(+)</text>
        <dbReference type="Rhea" id="RHEA:59416"/>
        <dbReference type="ChEBI" id="CHEBI:15377"/>
        <dbReference type="ChEBI" id="CHEBI:15379"/>
        <dbReference type="ChEBI" id="CHEBI:16240"/>
        <dbReference type="ChEBI" id="CHEBI:18086"/>
        <dbReference type="ChEBI" id="CHEBI:28938"/>
        <dbReference type="ChEBI" id="CHEBI:57887"/>
    </reaction>
</comment>
<comment type="cofactor">
    <cofactor evidence="3">
        <name>FAD</name>
        <dbReference type="ChEBI" id="CHEBI:57692"/>
    </cofactor>
</comment>
<comment type="activity regulation">
    <text evidence="5 6">Inhibited by both clorgyline (selective MAOA inhibitor) and deprenyl (selective MAOB inhibitor).</text>
</comment>
<comment type="subunit">
    <text evidence="2">Monomer, homo- or heterodimer (containing two subunits of similar size). Each subunit contains a covalently bound flavin. Enzymatically active as monomer (By similarity).</text>
</comment>
<comment type="subcellular location">
    <subcellularLocation>
        <location evidence="1">Mitochondrion outer membrane</location>
        <topology evidence="1">Single-pass type IV membrane protein</topology>
        <orientation evidence="1">Cytoplasmic side</orientation>
    </subcellularLocation>
</comment>
<comment type="tissue specificity">
    <text evidence="6">Strongest expression in brain and intestine, followed by liver, heart and gill. Little expression in spleen, eye or muscle. In brain, highest activity in noradrenergic and serotonergic cell groups and those of the habenulointerpeduncular pathway; moderate levels in dopaminergic cell clusters.</text>
</comment>
<comment type="miscellaneous">
    <text evidence="5 6">There appears to be only one form of this enzyme in zebrafish, whereas in mammals two forms (MAOA and MAOB) exist.</text>
</comment>
<comment type="similarity">
    <text evidence="4">Belongs to the flavin monoamine oxidase family.</text>
</comment>
<accession>Q6NSN2</accession>
<accession>Q804D6</accession>
<dbReference type="EC" id="1.4.3.21" evidence="5 6"/>
<dbReference type="EC" id="1.4.3.4" evidence="2"/>
<dbReference type="EMBL" id="AY185211">
    <property type="protein sequence ID" value="AAO16681.3"/>
    <property type="molecule type" value="mRNA"/>
</dbReference>
<dbReference type="EMBL" id="BC070013">
    <property type="protein sequence ID" value="AAH70013.1"/>
    <property type="molecule type" value="mRNA"/>
</dbReference>
<dbReference type="RefSeq" id="NP_997992.2">
    <property type="nucleotide sequence ID" value="NM_212827.3"/>
</dbReference>
<dbReference type="SMR" id="Q6NSN2"/>
<dbReference type="FunCoup" id="Q6NSN2">
    <property type="interactions" value="836"/>
</dbReference>
<dbReference type="STRING" id="7955.ENSDARP00000032834"/>
<dbReference type="BindingDB" id="Q6NSN2"/>
<dbReference type="ChEMBL" id="CHEMBL1681610"/>
<dbReference type="DrugCentral" id="Q6NSN2"/>
<dbReference type="PaxDb" id="7955-ENSDARP00000032834"/>
<dbReference type="DNASU" id="404730"/>
<dbReference type="Ensembl" id="ENSDART00000028225">
    <property type="protein sequence ID" value="ENSDARP00000032834"/>
    <property type="gene ID" value="ENSDARG00000023712"/>
</dbReference>
<dbReference type="GeneID" id="404730"/>
<dbReference type="KEGG" id="dre:404730"/>
<dbReference type="AGR" id="ZFIN:ZDB-GENE-040329-3"/>
<dbReference type="CTD" id="404730"/>
<dbReference type="ZFIN" id="ZDB-GENE-040329-3">
    <property type="gene designation" value="mao"/>
</dbReference>
<dbReference type="eggNOG" id="KOG0029">
    <property type="taxonomic scope" value="Eukaryota"/>
</dbReference>
<dbReference type="HOGENOM" id="CLU_004498_0_1_1"/>
<dbReference type="InParanoid" id="Q6NSN2"/>
<dbReference type="OMA" id="SVPTCLY"/>
<dbReference type="OrthoDB" id="7777654at2759"/>
<dbReference type="PhylomeDB" id="Q6NSN2"/>
<dbReference type="TreeFam" id="TF313314"/>
<dbReference type="BRENDA" id="1.4.3.4">
    <property type="organism ID" value="928"/>
</dbReference>
<dbReference type="Reactome" id="R-DRE-141333">
    <property type="pathway name" value="Biogenic amines are oxidatively deaminated to aldehydes by MAOA and MAOB"/>
</dbReference>
<dbReference type="PRO" id="PR:Q6NSN2"/>
<dbReference type="Proteomes" id="UP000000437">
    <property type="component" value="Chromosome 9"/>
</dbReference>
<dbReference type="Bgee" id="ENSDARG00000023712">
    <property type="expression patterns" value="Expressed in intestine and 52 other cell types or tissues"/>
</dbReference>
<dbReference type="GO" id="GO:0005741">
    <property type="term" value="C:mitochondrial outer membrane"/>
    <property type="evidence" value="ECO:0007669"/>
    <property type="project" value="UniProtKB-SubCell"/>
</dbReference>
<dbReference type="GO" id="GO:0005739">
    <property type="term" value="C:mitochondrion"/>
    <property type="evidence" value="ECO:0000318"/>
    <property type="project" value="GO_Central"/>
</dbReference>
<dbReference type="GO" id="GO:0050660">
    <property type="term" value="F:flavin adenine dinucleotide binding"/>
    <property type="evidence" value="ECO:0000318"/>
    <property type="project" value="GO_Central"/>
</dbReference>
<dbReference type="GO" id="GO:0097621">
    <property type="term" value="F:monoamine oxidase activity"/>
    <property type="evidence" value="ECO:0000250"/>
    <property type="project" value="UniProtKB"/>
</dbReference>
<dbReference type="GO" id="GO:0008131">
    <property type="term" value="F:primary methylamine oxidase activity"/>
    <property type="evidence" value="ECO:0000314"/>
    <property type="project" value="UniProtKB"/>
</dbReference>
<dbReference type="GO" id="GO:0042402">
    <property type="term" value="P:biogenic amine catabolic process"/>
    <property type="evidence" value="ECO:0000314"/>
    <property type="project" value="UniProtKB"/>
</dbReference>
<dbReference type="GO" id="GO:0006584">
    <property type="term" value="P:catecholamine metabolic process"/>
    <property type="evidence" value="ECO:0007669"/>
    <property type="project" value="UniProtKB-KW"/>
</dbReference>
<dbReference type="GO" id="GO:0035176">
    <property type="term" value="P:social behavior"/>
    <property type="evidence" value="ECO:0000315"/>
    <property type="project" value="ZFIN"/>
</dbReference>
<dbReference type="GO" id="GO:0001964">
    <property type="term" value="P:startle response"/>
    <property type="evidence" value="ECO:0000315"/>
    <property type="project" value="ZFIN"/>
</dbReference>
<dbReference type="GO" id="GO:0036269">
    <property type="term" value="P:swimming behavior"/>
    <property type="evidence" value="ECO:0000315"/>
    <property type="project" value="ZFIN"/>
</dbReference>
<dbReference type="FunFam" id="1.10.405.10:FF:000005">
    <property type="entry name" value="Amine oxidase [flavin-containing]"/>
    <property type="match status" value="1"/>
</dbReference>
<dbReference type="Gene3D" id="3.90.660.10">
    <property type="match status" value="1"/>
</dbReference>
<dbReference type="Gene3D" id="6.10.250.130">
    <property type="match status" value="1"/>
</dbReference>
<dbReference type="Gene3D" id="3.50.50.60">
    <property type="entry name" value="FAD/NAD(P)-binding domain"/>
    <property type="match status" value="1"/>
</dbReference>
<dbReference type="Gene3D" id="1.10.405.10">
    <property type="entry name" value="Guanine Nucleotide Dissociation Inhibitor, domain 1"/>
    <property type="match status" value="1"/>
</dbReference>
<dbReference type="InterPro" id="IPR002937">
    <property type="entry name" value="Amino_oxidase"/>
</dbReference>
<dbReference type="InterPro" id="IPR036188">
    <property type="entry name" value="FAD/NAD-bd_sf"/>
</dbReference>
<dbReference type="InterPro" id="IPR001613">
    <property type="entry name" value="Flavin_amine_oxidase"/>
</dbReference>
<dbReference type="InterPro" id="IPR050703">
    <property type="entry name" value="Flavin_MAO"/>
</dbReference>
<dbReference type="PANTHER" id="PTHR43563">
    <property type="entry name" value="AMINE OXIDASE"/>
    <property type="match status" value="1"/>
</dbReference>
<dbReference type="PANTHER" id="PTHR43563:SF11">
    <property type="entry name" value="AMINE OXIDASE [FLAVIN-CONTAINING] A"/>
    <property type="match status" value="1"/>
</dbReference>
<dbReference type="Pfam" id="PF01593">
    <property type="entry name" value="Amino_oxidase"/>
    <property type="match status" value="1"/>
</dbReference>
<dbReference type="PRINTS" id="PR00757">
    <property type="entry name" value="AMINEOXDASEF"/>
</dbReference>
<dbReference type="SUPFAM" id="SSF54373">
    <property type="entry name" value="FAD-linked reductases, C-terminal domain"/>
    <property type="match status" value="1"/>
</dbReference>
<dbReference type="SUPFAM" id="SSF51905">
    <property type="entry name" value="FAD/NAD(P)-binding domain"/>
    <property type="match status" value="1"/>
</dbReference>
<name>AOF_DANRE</name>
<gene>
    <name evidence="8 10" type="primary">mao</name>
    <name type="ORF">zgc:85761</name>
</gene>
<feature type="chain" id="PRO_0000283788" description="Amine oxidase [flavin-containing]">
    <location>
        <begin position="1"/>
        <end position="522"/>
    </location>
</feature>
<feature type="topological domain" description="Cytoplasmic" evidence="4">
    <location>
        <begin position="1"/>
        <end position="492"/>
    </location>
</feature>
<feature type="transmembrane region" description="Helical; Anchor for type IV membrane protein" evidence="4">
    <location>
        <begin position="493"/>
        <end position="513"/>
    </location>
</feature>
<feature type="topological domain" description="Mitochondrial intermembrane" evidence="4">
    <location>
        <begin position="514"/>
        <end position="522"/>
    </location>
</feature>
<feature type="site" description="Important for catalytic activity" evidence="3">
    <location>
        <position position="157"/>
    </location>
</feature>
<feature type="site" description="Important for catalytic activity" evidence="3">
    <location>
        <position position="366"/>
    </location>
</feature>
<feature type="site" description="Important for catalytic activity" evidence="3">
    <location>
        <position position="383"/>
    </location>
</feature>
<feature type="modified residue" description="S-8alpha-FAD cysteine" evidence="3">
    <location>
        <position position="398"/>
    </location>
</feature>
<feature type="sequence conflict" description="In Ref. 1; AAO16681." evidence="7" ref="1">
    <original>AR</original>
    <variation>QK</variation>
    <location>
        <begin position="223"/>
        <end position="224"/>
    </location>
</feature>
<feature type="sequence conflict" description="In Ref. 1; AAO16681." evidence="7" ref="1">
    <original>R</original>
    <variation>K</variation>
    <location>
        <position position="234"/>
    </location>
</feature>
<organism>
    <name type="scientific">Danio rerio</name>
    <name type="common">Zebrafish</name>
    <name type="synonym">Brachydanio rerio</name>
    <dbReference type="NCBI Taxonomy" id="7955"/>
    <lineage>
        <taxon>Eukaryota</taxon>
        <taxon>Metazoa</taxon>
        <taxon>Chordata</taxon>
        <taxon>Craniata</taxon>
        <taxon>Vertebrata</taxon>
        <taxon>Euteleostomi</taxon>
        <taxon>Actinopterygii</taxon>
        <taxon>Neopterygii</taxon>
        <taxon>Teleostei</taxon>
        <taxon>Ostariophysi</taxon>
        <taxon>Cypriniformes</taxon>
        <taxon>Danionidae</taxon>
        <taxon>Danioninae</taxon>
        <taxon>Danio</taxon>
    </lineage>
</organism>
<evidence type="ECO:0000250" key="1">
    <source>
        <dbReference type="UniProtKB" id="P21396"/>
    </source>
</evidence>
<evidence type="ECO:0000250" key="2">
    <source>
        <dbReference type="UniProtKB" id="P21397"/>
    </source>
</evidence>
<evidence type="ECO:0000250" key="3">
    <source>
        <dbReference type="UniProtKB" id="P27338"/>
    </source>
</evidence>
<evidence type="ECO:0000255" key="4"/>
<evidence type="ECO:0000269" key="5">
    <source>
    </source>
</evidence>
<evidence type="ECO:0000269" key="6">
    <source>
    </source>
</evidence>
<evidence type="ECO:0000305" key="7"/>
<evidence type="ECO:0000312" key="8">
    <source>
        <dbReference type="EMBL" id="AAH70013.1"/>
    </source>
</evidence>
<evidence type="ECO:0000312" key="9">
    <source>
        <dbReference type="EMBL" id="AAO16681.3"/>
    </source>
</evidence>
<evidence type="ECO:0000312" key="10">
    <source>
        <dbReference type="ZFIN" id="ZDB-GENE-040329-3"/>
    </source>
</evidence>
<protein>
    <recommendedName>
        <fullName evidence="2">Amine oxidase [flavin-containing]</fullName>
        <ecNumber evidence="5 6">1.4.3.21</ecNumber>
        <ecNumber evidence="2">1.4.3.4</ecNumber>
    </recommendedName>
    <alternativeName>
        <fullName>Monoamine oxidase</fullName>
        <shortName>MAO</shortName>
        <shortName>Z-MAO</shortName>
    </alternativeName>
</protein>
<sequence length="522" mass="58765">MTANAYDVIVIGGGISGLSAAKLLVDSGLNPVVLEARSRVGGRTYTVQNKETKWVDLGGAYIGPTQNRILRIAKQYGVKTYKVNEEESLVHYVKGKSYPFKGPFPPMWNPFAYMDYNNLWRTMDKMGMEIPKEAPWRAPHAEEWDKMTMQQLFDKICWTRSARRFATLFVNVNVTSEPHEVSALWFLWYVKQCGGTMRIFSTTNGGQERKFAGGANQISEGMARELGDRVKLSRAVCSIDQTGDLVEVRTVNEEVYKAKYVILAIPPGLNLKIHFNPELPPLRNQLIHRVPMGSVIKCMVYYKENFWRKKGYCGSMVIEEEDAPIGLTLDDTKPDGSVPAIMGFILARKSRKLANLTRDERKRRICEIYARVLGSEEALYPVHYEEKNWCEEEYSGGCYTAYFPPGIMTQFGRVLREPVGRLYFAGTETATEWSGYMEGAVQAGERASREVMCAMGKLHASQIWQSEPESMDVPARPFVTTFWERNLPSVGGFLKFMGVSSFLAAATAAGLVACKKGLLPRC</sequence>
<proteinExistence type="evidence at protein level"/>
<reference evidence="7 9" key="1">
    <citation type="journal article" date="2005" name="Comp. Biochem. Physiol.">
        <title>Molecular characterization of monoamine oxidase in zebrafish (Danio rerio).</title>
        <authorList>
            <person name="Setini A."/>
            <person name="Pierucci F."/>
            <person name="Senatori O."/>
            <person name="Nicotra A."/>
        </authorList>
    </citation>
    <scope>NUCLEOTIDE SEQUENCE [MRNA]</scope>
    <scope>FUNCTION</scope>
    <scope>CATALYTIC ACTIVITY</scope>
    <scope>ACTIVITY REGULATION</scope>
    <scope>3D-STRUCTURE MODELING</scope>
    <source>
        <tissue evidence="9">Liver</tissue>
    </source>
</reference>
<reference evidence="7" key="2">
    <citation type="journal article" date="2006" name="J. Comp. Neurol.">
        <title>Distinct structure and activity of monoamine oxidase in the brain of zebrafish (Danio rerio).</title>
        <authorList>
            <person name="Anichtchik O."/>
            <person name="Sallinen V."/>
            <person name="Peitsaro N."/>
            <person name="Panula P."/>
        </authorList>
    </citation>
    <scope>NUCLEOTIDE SEQUENCE [MRNA]</scope>
    <scope>FUNCTION</scope>
    <scope>CATALYTIC ACTIVITY</scope>
    <scope>ACTIVITY REGULATION</scope>
    <scope>TISSUE SPECIFICITY</scope>
    <source>
        <tissue evidence="6">Brain</tissue>
    </source>
</reference>
<reference evidence="8" key="3">
    <citation type="submission" date="2004-05" db="EMBL/GenBank/DDBJ databases">
        <authorList>
            <consortium name="NIH - Zebrafish Gene Collection (ZGC) project"/>
        </authorList>
    </citation>
    <scope>NUCLEOTIDE SEQUENCE [LARGE SCALE MRNA]</scope>
    <source>
        <tissue evidence="8">Kidney</tissue>
    </source>
</reference>
<keyword id="KW-0128">Catecholamine metabolism</keyword>
<keyword id="KW-0274">FAD</keyword>
<keyword id="KW-0285">Flavoprotein</keyword>
<keyword id="KW-0472">Membrane</keyword>
<keyword id="KW-0496">Mitochondrion</keyword>
<keyword id="KW-1000">Mitochondrion outer membrane</keyword>
<keyword id="KW-0531">Neurotransmitter degradation</keyword>
<keyword id="KW-0560">Oxidoreductase</keyword>
<keyword id="KW-1185">Reference proteome</keyword>
<keyword id="KW-0812">Transmembrane</keyword>
<keyword id="KW-1133">Transmembrane helix</keyword>